<keyword id="KW-0378">Hydrolase</keyword>
<keyword id="KW-0460">Magnesium</keyword>
<keyword id="KW-0511">Multifunctional enzyme</keyword>
<keyword id="KW-0535">Nitrogen fixation</keyword>
<keyword id="KW-0548">Nucleotidyltransferase</keyword>
<keyword id="KW-0677">Repeat</keyword>
<keyword id="KW-0808">Transferase</keyword>
<organism>
    <name type="scientific">Rhodopseudomonas palustris (strain ATCC BAA-98 / CGA009)</name>
    <dbReference type="NCBI Taxonomy" id="258594"/>
    <lineage>
        <taxon>Bacteria</taxon>
        <taxon>Pseudomonadati</taxon>
        <taxon>Pseudomonadota</taxon>
        <taxon>Alphaproteobacteria</taxon>
        <taxon>Hyphomicrobiales</taxon>
        <taxon>Nitrobacteraceae</taxon>
        <taxon>Rhodopseudomonas</taxon>
    </lineage>
</organism>
<name>GLND_RHOPA</name>
<sequence>MSPSRPAADERFDSARVAAEIATLAEKHTGNDAAFRTALAMLMKAELAKARTEAEAQLLRDRHGRRCAERLCYVQDAIIRLLFNAATEYLYNTPTPSSSERMTVVATGGYGRGLMAPESDIDLLFILPYKQTAWGEQVAEVILYCLWDIGLKVGHATRSVDECIRQARADMTIRTAILETRFLAGDEALYAELVERFDKEVVEGTAAEFVAAKLAEREERHRRSGQSRYLVEPNVKDGKGGLRDLHTLFWIAKYVYRVREASELSERGVFDPAEFRTFRRCEDFLWSVRCNIHFVTKRAEDRLSFDLQREIGVRLGYTSHPGMQDVERFMKHYFLIAKEVGNLTAILCAKLEDQQAKAAPALTRMMARLRPAAKRRRVPESDDFVIDNNRINLAVPDVFKHDPVNLIRIFRLAQKNNLAFHPDAMRSVTRSLSLITPQLRDNPEANRLFVEILTSDNAEPVLRRMNETGVLGRFIRAFGRIVSMMQFNMYHSYTVDEHLIRCVGNLQEIERGGNDEFALSSELIRKIRPDHRAVLYAAVLLHDIAKGQPEDHSTAGAKVARRLCPRFGFSTADTELVAWLIEKHLVMSTVAQSRDLSDRKTIENFAAVVETVEQMKMLTILTTADIRGVGPGVWNGWKAQLIRTLYYETEPVLTGGFSEVNRAERIRAAQAEFRAAFTEWPEADLNAYVARHYPAYWLKVDLQRKIRHARFLRASEQAGHKLAINVGFDEARAVTELTILAVDHPWLLSVIAGACASAGANIVDAQIYTTTDGRALDTISISREYDRDEDEGRRATRIGETIEEVLEGKLRLPEAVARRASSGSKAKLRAFVVEPEVEINNNWSDRYTVIEVSGLDRPGLLYQLTTAISKLNLNIASAHVATFGERARDVFYVTDLLGAQITAPTRQAAIKRALVHLLANGDAAEKPAA</sequence>
<proteinExistence type="inferred from homology"/>
<reference key="1">
    <citation type="journal article" date="2004" name="Nat. Biotechnol.">
        <title>Complete genome sequence of the metabolically versatile photosynthetic bacterium Rhodopseudomonas palustris.</title>
        <authorList>
            <person name="Larimer F.W."/>
            <person name="Chain P."/>
            <person name="Hauser L."/>
            <person name="Lamerdin J.E."/>
            <person name="Malfatti S."/>
            <person name="Do L."/>
            <person name="Land M.L."/>
            <person name="Pelletier D.A."/>
            <person name="Beatty J.T."/>
            <person name="Lang A.S."/>
            <person name="Tabita F.R."/>
            <person name="Gibson J.L."/>
            <person name="Hanson T.E."/>
            <person name="Bobst C."/>
            <person name="Torres y Torres J.L."/>
            <person name="Peres C."/>
            <person name="Harrison F.H."/>
            <person name="Gibson J."/>
            <person name="Harwood C.S."/>
        </authorList>
    </citation>
    <scope>NUCLEOTIDE SEQUENCE [LARGE SCALE GENOMIC DNA]</scope>
    <source>
        <strain>ATCC BAA-98 / CGA009</strain>
    </source>
</reference>
<protein>
    <recommendedName>
        <fullName evidence="1">Bifunctional uridylyltransferase/uridylyl-removing enzyme</fullName>
        <shortName evidence="1">UTase/UR</shortName>
    </recommendedName>
    <alternativeName>
        <fullName evidence="1">Bifunctional [protein-PII] modification enzyme</fullName>
    </alternativeName>
    <alternativeName>
        <fullName evidence="1">Bifunctional nitrogen sensor protein</fullName>
    </alternativeName>
    <domain>
        <recommendedName>
            <fullName evidence="1">[Protein-PII] uridylyltransferase</fullName>
            <shortName evidence="1">PII uridylyltransferase</shortName>
            <shortName evidence="1">UTase</shortName>
            <ecNumber evidence="1">2.7.7.59</ecNumber>
        </recommendedName>
    </domain>
    <domain>
        <recommendedName>
            <fullName evidence="1">[Protein-PII]-UMP uridylyl-removing enzyme</fullName>
            <shortName evidence="1">UR</shortName>
            <ecNumber evidence="1">3.1.4.-</ecNumber>
        </recommendedName>
    </domain>
</protein>
<accession>P62223</accession>
<evidence type="ECO:0000255" key="1">
    <source>
        <dbReference type="HAMAP-Rule" id="MF_00277"/>
    </source>
</evidence>
<evidence type="ECO:0000255" key="2">
    <source>
        <dbReference type="PROSITE-ProRule" id="PRU01175"/>
    </source>
</evidence>
<evidence type="ECO:0000305" key="3"/>
<feature type="chain" id="PRO_0000192762" description="Bifunctional uridylyltransferase/uridylyl-removing enzyme">
    <location>
        <begin position="1"/>
        <end position="929"/>
    </location>
</feature>
<feature type="domain" description="HD" evidence="2">
    <location>
        <begin position="495"/>
        <end position="618"/>
    </location>
</feature>
<feature type="domain" description="ACT 1" evidence="1">
    <location>
        <begin position="736"/>
        <end position="818"/>
    </location>
</feature>
<feature type="domain" description="ACT 2" evidence="1">
    <location>
        <begin position="849"/>
        <end position="929"/>
    </location>
</feature>
<feature type="region of interest" description="Uridylyltransferase">
    <location>
        <begin position="1"/>
        <end position="379"/>
    </location>
</feature>
<feature type="region of interest" description="Uridylyl-removing">
    <location>
        <begin position="380"/>
        <end position="735"/>
    </location>
</feature>
<comment type="function">
    <text evidence="1">Modifies, by uridylylation and deuridylylation, the PII regulatory proteins (GlnB and homologs), in response to the nitrogen status of the cell that GlnD senses through the glutamine level. Under low glutamine levels, catalyzes the conversion of the PII proteins and UTP to PII-UMP and PPi, while under higher glutamine levels, GlnD hydrolyzes PII-UMP to PII and UMP (deuridylylation). Thus, controls uridylylation state and activity of the PII proteins, and plays an important role in the regulation of nitrogen fixation and metabolism.</text>
</comment>
<comment type="catalytic activity">
    <reaction evidence="1">
        <text>[protein-PII]-L-tyrosine + UTP = [protein-PII]-uridylyl-L-tyrosine + diphosphate</text>
        <dbReference type="Rhea" id="RHEA:13673"/>
        <dbReference type="Rhea" id="RHEA-COMP:12147"/>
        <dbReference type="Rhea" id="RHEA-COMP:12148"/>
        <dbReference type="ChEBI" id="CHEBI:33019"/>
        <dbReference type="ChEBI" id="CHEBI:46398"/>
        <dbReference type="ChEBI" id="CHEBI:46858"/>
        <dbReference type="ChEBI" id="CHEBI:90602"/>
        <dbReference type="EC" id="2.7.7.59"/>
    </reaction>
</comment>
<comment type="catalytic activity">
    <reaction evidence="1">
        <text>[protein-PII]-uridylyl-L-tyrosine + H2O = [protein-PII]-L-tyrosine + UMP + H(+)</text>
        <dbReference type="Rhea" id="RHEA:48600"/>
        <dbReference type="Rhea" id="RHEA-COMP:12147"/>
        <dbReference type="Rhea" id="RHEA-COMP:12148"/>
        <dbReference type="ChEBI" id="CHEBI:15377"/>
        <dbReference type="ChEBI" id="CHEBI:15378"/>
        <dbReference type="ChEBI" id="CHEBI:46858"/>
        <dbReference type="ChEBI" id="CHEBI:57865"/>
        <dbReference type="ChEBI" id="CHEBI:90602"/>
    </reaction>
</comment>
<comment type="cofactor">
    <cofactor evidence="1">
        <name>Mg(2+)</name>
        <dbReference type="ChEBI" id="CHEBI:18420"/>
    </cofactor>
</comment>
<comment type="activity regulation">
    <text evidence="1">Uridylyltransferase (UTase) activity is inhibited by glutamine, while glutamine activates uridylyl-removing (UR) activity.</text>
</comment>
<comment type="domain">
    <text evidence="1">Has four distinct domains: an N-terminal nucleotidyltransferase (NT) domain responsible for UTase activity, a central HD domain that encodes UR activity, and two C-terminal ACT domains that seem to have a role in glutamine sensing.</text>
</comment>
<comment type="similarity">
    <text evidence="1">Belongs to the GlnD family.</text>
</comment>
<comment type="sequence caution" evidence="3">
    <conflict type="erroneous initiation">
        <sequence resource="EMBL-CDS" id="CAE26035"/>
    </conflict>
</comment>
<gene>
    <name evidence="1" type="primary">glnD</name>
    <name type="ordered locus">RPA0591</name>
</gene>
<dbReference type="EC" id="2.7.7.59" evidence="1"/>
<dbReference type="EC" id="3.1.4.-" evidence="1"/>
<dbReference type="EMBL" id="BX572594">
    <property type="protein sequence ID" value="CAE26035.1"/>
    <property type="status" value="ALT_INIT"/>
    <property type="molecule type" value="Genomic_DNA"/>
</dbReference>
<dbReference type="SMR" id="P62223"/>
<dbReference type="IntAct" id="P62223">
    <property type="interactions" value="1"/>
</dbReference>
<dbReference type="MINT" id="P62223"/>
<dbReference type="STRING" id="258594.RPA0591"/>
<dbReference type="eggNOG" id="COG2844">
    <property type="taxonomic scope" value="Bacteria"/>
</dbReference>
<dbReference type="HOGENOM" id="CLU_012833_1_0_5"/>
<dbReference type="PhylomeDB" id="P62223"/>
<dbReference type="GO" id="GO:0008773">
    <property type="term" value="F:[protein-PII] uridylyltransferase activity"/>
    <property type="evidence" value="ECO:0007669"/>
    <property type="project" value="UniProtKB-UniRule"/>
</dbReference>
<dbReference type="GO" id="GO:0008081">
    <property type="term" value="F:phosphoric diester hydrolase activity"/>
    <property type="evidence" value="ECO:0007669"/>
    <property type="project" value="UniProtKB-UniRule"/>
</dbReference>
<dbReference type="GO" id="GO:0009399">
    <property type="term" value="P:nitrogen fixation"/>
    <property type="evidence" value="ECO:0007669"/>
    <property type="project" value="UniProtKB-UniRule"/>
</dbReference>
<dbReference type="GO" id="GO:0006808">
    <property type="term" value="P:regulation of nitrogen utilization"/>
    <property type="evidence" value="ECO:0007669"/>
    <property type="project" value="UniProtKB-UniRule"/>
</dbReference>
<dbReference type="CDD" id="cd04899">
    <property type="entry name" value="ACT_ACR-UUR-like_2"/>
    <property type="match status" value="1"/>
</dbReference>
<dbReference type="CDD" id="cd04900">
    <property type="entry name" value="ACT_UUR-like_1"/>
    <property type="match status" value="1"/>
</dbReference>
<dbReference type="CDD" id="cd05401">
    <property type="entry name" value="NT_GlnE_GlnD_like"/>
    <property type="match status" value="1"/>
</dbReference>
<dbReference type="Gene3D" id="3.30.70.260">
    <property type="match status" value="1"/>
</dbReference>
<dbReference type="Gene3D" id="3.30.460.10">
    <property type="entry name" value="Beta Polymerase, domain 2"/>
    <property type="match status" value="1"/>
</dbReference>
<dbReference type="Gene3D" id="1.10.3090.10">
    <property type="entry name" value="cca-adding enzyme, domain 2"/>
    <property type="match status" value="1"/>
</dbReference>
<dbReference type="HAMAP" id="MF_00277">
    <property type="entry name" value="PII_uridylyl_transf"/>
    <property type="match status" value="1"/>
</dbReference>
<dbReference type="InterPro" id="IPR045865">
    <property type="entry name" value="ACT-like_dom_sf"/>
</dbReference>
<dbReference type="InterPro" id="IPR002912">
    <property type="entry name" value="ACT_dom"/>
</dbReference>
<dbReference type="InterPro" id="IPR003607">
    <property type="entry name" value="HD/PDEase_dom"/>
</dbReference>
<dbReference type="InterPro" id="IPR006674">
    <property type="entry name" value="HD_domain"/>
</dbReference>
<dbReference type="InterPro" id="IPR043519">
    <property type="entry name" value="NT_sf"/>
</dbReference>
<dbReference type="InterPro" id="IPR013546">
    <property type="entry name" value="PII_UdlTrfase/GS_AdlTrfase"/>
</dbReference>
<dbReference type="InterPro" id="IPR002934">
    <property type="entry name" value="Polymerase_NTP_transf_dom"/>
</dbReference>
<dbReference type="InterPro" id="IPR010043">
    <property type="entry name" value="UTase/UR"/>
</dbReference>
<dbReference type="NCBIfam" id="NF003467">
    <property type="entry name" value="PRK05092.1"/>
    <property type="match status" value="1"/>
</dbReference>
<dbReference type="NCBIfam" id="TIGR01693">
    <property type="entry name" value="UTase_glnD"/>
    <property type="match status" value="1"/>
</dbReference>
<dbReference type="PANTHER" id="PTHR47320">
    <property type="entry name" value="BIFUNCTIONAL URIDYLYLTRANSFERASE/URIDYLYL-REMOVING ENZYME"/>
    <property type="match status" value="1"/>
</dbReference>
<dbReference type="PANTHER" id="PTHR47320:SF1">
    <property type="entry name" value="BIFUNCTIONAL URIDYLYLTRANSFERASE_URIDYLYL-REMOVING ENZYME"/>
    <property type="match status" value="1"/>
</dbReference>
<dbReference type="Pfam" id="PF01842">
    <property type="entry name" value="ACT"/>
    <property type="match status" value="1"/>
</dbReference>
<dbReference type="Pfam" id="PF08335">
    <property type="entry name" value="GlnD_UR_UTase"/>
    <property type="match status" value="1"/>
</dbReference>
<dbReference type="Pfam" id="PF01966">
    <property type="entry name" value="HD"/>
    <property type="match status" value="1"/>
</dbReference>
<dbReference type="Pfam" id="PF01909">
    <property type="entry name" value="NTP_transf_2"/>
    <property type="match status" value="1"/>
</dbReference>
<dbReference type="PIRSF" id="PIRSF006288">
    <property type="entry name" value="PII_uridyltransf"/>
    <property type="match status" value="1"/>
</dbReference>
<dbReference type="SMART" id="SM00471">
    <property type="entry name" value="HDc"/>
    <property type="match status" value="1"/>
</dbReference>
<dbReference type="SUPFAM" id="SSF55021">
    <property type="entry name" value="ACT-like"/>
    <property type="match status" value="2"/>
</dbReference>
<dbReference type="SUPFAM" id="SSF81301">
    <property type="entry name" value="Nucleotidyltransferase"/>
    <property type="match status" value="1"/>
</dbReference>
<dbReference type="SUPFAM" id="SSF81593">
    <property type="entry name" value="Nucleotidyltransferase substrate binding subunit/domain"/>
    <property type="match status" value="1"/>
</dbReference>
<dbReference type="SUPFAM" id="SSF81891">
    <property type="entry name" value="Poly A polymerase C-terminal region-like"/>
    <property type="match status" value="1"/>
</dbReference>
<dbReference type="PROSITE" id="PS51671">
    <property type="entry name" value="ACT"/>
    <property type="match status" value="2"/>
</dbReference>
<dbReference type="PROSITE" id="PS51831">
    <property type="entry name" value="HD"/>
    <property type="match status" value="1"/>
</dbReference>